<keyword id="KW-0687">Ribonucleoprotein</keyword>
<keyword id="KW-0689">Ribosomal protein</keyword>
<protein>
    <recommendedName>
        <fullName evidence="1">Small ribosomal subunit protein uS2</fullName>
    </recommendedName>
    <alternativeName>
        <fullName evidence="3">30S ribosomal protein S2</fullName>
    </alternativeName>
</protein>
<evidence type="ECO:0000255" key="1">
    <source>
        <dbReference type="HAMAP-Rule" id="MF_00291"/>
    </source>
</evidence>
<evidence type="ECO:0000256" key="2">
    <source>
        <dbReference type="SAM" id="MobiDB-lite"/>
    </source>
</evidence>
<evidence type="ECO:0000305" key="3"/>
<sequence>MGSIPEFSIRDLMEAGVHLGHKAGRWNPAMAPYIYGVHRYKDIHIIDLRKTAVLLRNALSVLYDVVHRRGRVLFVGTKVQASNVIAEEAARCGQYYVNHRWLGGMLTNWETVSSSIRRLLDFEKLLNDTDAKFTKKELLMFDKKREKLERSLGGIREMGGLPHILFVIDTNKEHIAIQEANKLKIPVVAVLDTNSDPRGVDYPIPGNDDSIRSIDFFCRAVSNTILEAIRSDLMSSGISVAGSVGQAKDGSVVDSGKGKSIAAHKGGGKASKGAAEVVAGGSVVSASGGEDAVVQE</sequence>
<dbReference type="EMBL" id="CP000235">
    <property type="protein sequence ID" value="ABD43442.1"/>
    <property type="molecule type" value="Genomic_DNA"/>
</dbReference>
<dbReference type="RefSeq" id="WP_011450525.1">
    <property type="nucleotide sequence ID" value="NC_007797.1"/>
</dbReference>
<dbReference type="SMR" id="Q2GKU9"/>
<dbReference type="STRING" id="212042.APH_0397"/>
<dbReference type="PaxDb" id="212042-APH_0397"/>
<dbReference type="EnsemblBacteria" id="ABD43442">
    <property type="protein sequence ID" value="ABD43442"/>
    <property type="gene ID" value="APH_0397"/>
</dbReference>
<dbReference type="GeneID" id="92747423"/>
<dbReference type="KEGG" id="aph:APH_0397"/>
<dbReference type="eggNOG" id="COG0052">
    <property type="taxonomic scope" value="Bacteria"/>
</dbReference>
<dbReference type="HOGENOM" id="CLU_040318_2_1_5"/>
<dbReference type="Proteomes" id="UP000001943">
    <property type="component" value="Chromosome"/>
</dbReference>
<dbReference type="GO" id="GO:0022627">
    <property type="term" value="C:cytosolic small ribosomal subunit"/>
    <property type="evidence" value="ECO:0007669"/>
    <property type="project" value="TreeGrafter"/>
</dbReference>
<dbReference type="GO" id="GO:0003735">
    <property type="term" value="F:structural constituent of ribosome"/>
    <property type="evidence" value="ECO:0007669"/>
    <property type="project" value="InterPro"/>
</dbReference>
<dbReference type="GO" id="GO:0006412">
    <property type="term" value="P:translation"/>
    <property type="evidence" value="ECO:0007669"/>
    <property type="project" value="UniProtKB-UniRule"/>
</dbReference>
<dbReference type="CDD" id="cd01425">
    <property type="entry name" value="RPS2"/>
    <property type="match status" value="1"/>
</dbReference>
<dbReference type="Gene3D" id="3.40.50.10490">
    <property type="entry name" value="Glucose-6-phosphate isomerase like protein, domain 1"/>
    <property type="match status" value="1"/>
</dbReference>
<dbReference type="Gene3D" id="1.10.287.610">
    <property type="entry name" value="Helix hairpin bin"/>
    <property type="match status" value="1"/>
</dbReference>
<dbReference type="HAMAP" id="MF_00291_B">
    <property type="entry name" value="Ribosomal_uS2_B"/>
    <property type="match status" value="1"/>
</dbReference>
<dbReference type="InterPro" id="IPR001865">
    <property type="entry name" value="Ribosomal_uS2"/>
</dbReference>
<dbReference type="InterPro" id="IPR005706">
    <property type="entry name" value="Ribosomal_uS2_bac/mit/plastid"/>
</dbReference>
<dbReference type="InterPro" id="IPR018130">
    <property type="entry name" value="Ribosomal_uS2_CS"/>
</dbReference>
<dbReference type="InterPro" id="IPR023591">
    <property type="entry name" value="Ribosomal_uS2_flav_dom_sf"/>
</dbReference>
<dbReference type="NCBIfam" id="TIGR01011">
    <property type="entry name" value="rpsB_bact"/>
    <property type="match status" value="1"/>
</dbReference>
<dbReference type="PANTHER" id="PTHR12534">
    <property type="entry name" value="30S RIBOSOMAL PROTEIN S2 PROKARYOTIC AND ORGANELLAR"/>
    <property type="match status" value="1"/>
</dbReference>
<dbReference type="PANTHER" id="PTHR12534:SF0">
    <property type="entry name" value="SMALL RIBOSOMAL SUBUNIT PROTEIN US2M"/>
    <property type="match status" value="1"/>
</dbReference>
<dbReference type="Pfam" id="PF00318">
    <property type="entry name" value="Ribosomal_S2"/>
    <property type="match status" value="1"/>
</dbReference>
<dbReference type="PRINTS" id="PR00395">
    <property type="entry name" value="RIBOSOMALS2"/>
</dbReference>
<dbReference type="SUPFAM" id="SSF52313">
    <property type="entry name" value="Ribosomal protein S2"/>
    <property type="match status" value="1"/>
</dbReference>
<dbReference type="PROSITE" id="PS00962">
    <property type="entry name" value="RIBOSOMAL_S2_1"/>
    <property type="match status" value="1"/>
</dbReference>
<dbReference type="PROSITE" id="PS00963">
    <property type="entry name" value="RIBOSOMAL_S2_2"/>
    <property type="match status" value="1"/>
</dbReference>
<comment type="similarity">
    <text evidence="1">Belongs to the universal ribosomal protein uS2 family.</text>
</comment>
<accession>Q2GKU9</accession>
<gene>
    <name evidence="1" type="primary">rpsB</name>
    <name type="ordered locus">APH_0397</name>
</gene>
<name>RS2_ANAPZ</name>
<organism>
    <name type="scientific">Anaplasma phagocytophilum (strain HZ)</name>
    <dbReference type="NCBI Taxonomy" id="212042"/>
    <lineage>
        <taxon>Bacteria</taxon>
        <taxon>Pseudomonadati</taxon>
        <taxon>Pseudomonadota</taxon>
        <taxon>Alphaproteobacteria</taxon>
        <taxon>Rickettsiales</taxon>
        <taxon>Anaplasmataceae</taxon>
        <taxon>Anaplasma</taxon>
        <taxon>phagocytophilum group</taxon>
    </lineage>
</organism>
<proteinExistence type="inferred from homology"/>
<reference key="1">
    <citation type="journal article" date="2006" name="PLoS Genet.">
        <title>Comparative genomics of emerging human ehrlichiosis agents.</title>
        <authorList>
            <person name="Dunning Hotopp J.C."/>
            <person name="Lin M."/>
            <person name="Madupu R."/>
            <person name="Crabtree J."/>
            <person name="Angiuoli S.V."/>
            <person name="Eisen J.A."/>
            <person name="Seshadri R."/>
            <person name="Ren Q."/>
            <person name="Wu M."/>
            <person name="Utterback T.R."/>
            <person name="Smith S."/>
            <person name="Lewis M."/>
            <person name="Khouri H."/>
            <person name="Zhang C."/>
            <person name="Niu H."/>
            <person name="Lin Q."/>
            <person name="Ohashi N."/>
            <person name="Zhi N."/>
            <person name="Nelson W.C."/>
            <person name="Brinkac L.M."/>
            <person name="Dodson R.J."/>
            <person name="Rosovitz M.J."/>
            <person name="Sundaram J.P."/>
            <person name="Daugherty S.C."/>
            <person name="Davidsen T."/>
            <person name="Durkin A.S."/>
            <person name="Gwinn M.L."/>
            <person name="Haft D.H."/>
            <person name="Selengut J.D."/>
            <person name="Sullivan S.A."/>
            <person name="Zafar N."/>
            <person name="Zhou L."/>
            <person name="Benahmed F."/>
            <person name="Forberger H."/>
            <person name="Halpin R."/>
            <person name="Mulligan S."/>
            <person name="Robinson J."/>
            <person name="White O."/>
            <person name="Rikihisa Y."/>
            <person name="Tettelin H."/>
        </authorList>
    </citation>
    <scope>NUCLEOTIDE SEQUENCE [LARGE SCALE GENOMIC DNA]</scope>
    <source>
        <strain>HZ</strain>
    </source>
</reference>
<feature type="chain" id="PRO_1000003885" description="Small ribosomal subunit protein uS2">
    <location>
        <begin position="1"/>
        <end position="296"/>
    </location>
</feature>
<feature type="region of interest" description="Disordered" evidence="2">
    <location>
        <begin position="246"/>
        <end position="272"/>
    </location>
</feature>